<comment type="function">
    <text evidence="1">Component of the eukaryotic translation initiation factor 3 (eIF-3) complex, which is involved in protein synthesis of a specialized repertoire of mRNAs and, together with other initiation factors, stimulates binding of mRNA and methionyl-tRNAi to the 40S ribosome. The eIF-3 complex specifically targets and initiates translation of a subset of mRNAs involved in cell proliferation.</text>
</comment>
<comment type="subunit">
    <text evidence="1">Component of the eukaryotic translation initiation factor 3 (eIF-3) complex.</text>
</comment>
<comment type="subcellular location">
    <subcellularLocation>
        <location evidence="1">Cytoplasm</location>
    </subcellularLocation>
</comment>
<comment type="similarity">
    <text evidence="1">Belongs to the eIF-3 subunit F family.</text>
</comment>
<organism>
    <name type="scientific">Aspergillus niger (strain ATCC MYA-4892 / CBS 513.88 / FGSC A1513)</name>
    <dbReference type="NCBI Taxonomy" id="425011"/>
    <lineage>
        <taxon>Eukaryota</taxon>
        <taxon>Fungi</taxon>
        <taxon>Dikarya</taxon>
        <taxon>Ascomycota</taxon>
        <taxon>Pezizomycotina</taxon>
        <taxon>Eurotiomycetes</taxon>
        <taxon>Eurotiomycetidae</taxon>
        <taxon>Eurotiales</taxon>
        <taxon>Aspergillaceae</taxon>
        <taxon>Aspergillus</taxon>
        <taxon>Aspergillus subgen. Circumdati</taxon>
    </lineage>
</organism>
<evidence type="ECO:0000255" key="1">
    <source>
        <dbReference type="HAMAP-Rule" id="MF_03005"/>
    </source>
</evidence>
<evidence type="ECO:0000255" key="2">
    <source>
        <dbReference type="PROSITE-ProRule" id="PRU01182"/>
    </source>
</evidence>
<evidence type="ECO:0000256" key="3">
    <source>
        <dbReference type="SAM" id="MobiDB-lite"/>
    </source>
</evidence>
<accession>A2QQ10</accession>
<sequence length="375" mass="40898">MAEADSFLHLARPLGPVAVGTAPTTAPLNVVIQPQALFSILDHSLRRNADQERVIGTLLGTRSEDGTEVEIRSTFAVGHTETTDQVEVDMEYQKQMLALHLKANPKEVLVGWYATSSELNTFSALIQNFYSGQGDGTWPHPAVHLTVSTEAGKDIETRAYISAPVGVTAERAADSAAFIPVPYEIRYGEAEKSGLEAIGAARDAEERRANIFTDIEALERAIEDVLGMIDRVSRYVESVIDEEAPASTALGQYLLNTLALAPKVEPADIERDFNNHIQDVLVVSYLANTIRTQMELSNRLATAQLTLGGESGSGESGDKRGGQRGGKGGRGGQQRTQERSGEEARAPYPFLCQPRRTRSYEERTNEAQNGKEEKK</sequence>
<name>EIF3F_ASPNC</name>
<dbReference type="EMBL" id="AM270157">
    <property type="protein sequence ID" value="CAK45240.1"/>
    <property type="molecule type" value="Genomic_DNA"/>
</dbReference>
<dbReference type="SMR" id="A2QQ10"/>
<dbReference type="EnsemblFungi" id="CAK45240">
    <property type="protein sequence ID" value="CAK45240"/>
    <property type="gene ID" value="An08g00880"/>
</dbReference>
<dbReference type="VEuPathDB" id="FungiDB:An08g00880"/>
<dbReference type="HOGENOM" id="CLU_027018_0_0_1"/>
<dbReference type="Proteomes" id="UP000006706">
    <property type="component" value="Chromosome 8R"/>
</dbReference>
<dbReference type="GO" id="GO:0016282">
    <property type="term" value="C:eukaryotic 43S preinitiation complex"/>
    <property type="evidence" value="ECO:0007669"/>
    <property type="project" value="UniProtKB-UniRule"/>
</dbReference>
<dbReference type="GO" id="GO:0033290">
    <property type="term" value="C:eukaryotic 48S preinitiation complex"/>
    <property type="evidence" value="ECO:0007669"/>
    <property type="project" value="UniProtKB-UniRule"/>
</dbReference>
<dbReference type="GO" id="GO:0071540">
    <property type="term" value="C:eukaryotic translation initiation factor 3 complex, eIF3e"/>
    <property type="evidence" value="ECO:0007669"/>
    <property type="project" value="EnsemblFungi"/>
</dbReference>
<dbReference type="GO" id="GO:0071541">
    <property type="term" value="C:eukaryotic translation initiation factor 3 complex, eIF3m"/>
    <property type="evidence" value="ECO:0007669"/>
    <property type="project" value="EnsemblFungi"/>
</dbReference>
<dbReference type="GO" id="GO:0008237">
    <property type="term" value="F:metallopeptidase activity"/>
    <property type="evidence" value="ECO:0007669"/>
    <property type="project" value="InterPro"/>
</dbReference>
<dbReference type="GO" id="GO:0003743">
    <property type="term" value="F:translation initiation factor activity"/>
    <property type="evidence" value="ECO:0007669"/>
    <property type="project" value="UniProtKB-UniRule"/>
</dbReference>
<dbReference type="GO" id="GO:0031369">
    <property type="term" value="F:translation initiation factor binding"/>
    <property type="evidence" value="ECO:0007669"/>
    <property type="project" value="InterPro"/>
</dbReference>
<dbReference type="GO" id="GO:0001732">
    <property type="term" value="P:formation of cytoplasmic translation initiation complex"/>
    <property type="evidence" value="ECO:0007669"/>
    <property type="project" value="UniProtKB-UniRule"/>
</dbReference>
<dbReference type="CDD" id="cd08064">
    <property type="entry name" value="MPN_eIF3f"/>
    <property type="match status" value="1"/>
</dbReference>
<dbReference type="FunFam" id="3.40.140.10:FF:000019">
    <property type="entry name" value="Eukaryotic translation initiation factor 3 subunit F"/>
    <property type="match status" value="1"/>
</dbReference>
<dbReference type="Gene3D" id="3.40.140.10">
    <property type="entry name" value="Cytidine Deaminase, domain 2"/>
    <property type="match status" value="1"/>
</dbReference>
<dbReference type="HAMAP" id="MF_03005">
    <property type="entry name" value="eIF3f"/>
    <property type="match status" value="1"/>
</dbReference>
<dbReference type="InterPro" id="IPR027531">
    <property type="entry name" value="eIF3f"/>
</dbReference>
<dbReference type="InterPro" id="IPR024969">
    <property type="entry name" value="EIF3F/CSN6-like_C"/>
</dbReference>
<dbReference type="InterPro" id="IPR000555">
    <property type="entry name" value="JAMM/MPN+_dom"/>
</dbReference>
<dbReference type="InterPro" id="IPR037518">
    <property type="entry name" value="MPN"/>
</dbReference>
<dbReference type="PANTHER" id="PTHR10540:SF6">
    <property type="entry name" value="EUKARYOTIC TRANSLATION INITIATION FACTOR 3 SUBUNIT F"/>
    <property type="match status" value="1"/>
</dbReference>
<dbReference type="PANTHER" id="PTHR10540">
    <property type="entry name" value="EUKARYOTIC TRANSLATION INITIATION FACTOR 3 SUBUNIT F-RELATED"/>
    <property type="match status" value="1"/>
</dbReference>
<dbReference type="Pfam" id="PF01398">
    <property type="entry name" value="JAB"/>
    <property type="match status" value="1"/>
</dbReference>
<dbReference type="Pfam" id="PF13012">
    <property type="entry name" value="MitMem_reg"/>
    <property type="match status" value="1"/>
</dbReference>
<dbReference type="SMART" id="SM00232">
    <property type="entry name" value="JAB_MPN"/>
    <property type="match status" value="1"/>
</dbReference>
<dbReference type="PROSITE" id="PS50249">
    <property type="entry name" value="MPN"/>
    <property type="match status" value="1"/>
</dbReference>
<feature type="chain" id="PRO_0000364324" description="Eukaryotic translation initiation factor 3 subunit F">
    <location>
        <begin position="1"/>
        <end position="375"/>
    </location>
</feature>
<feature type="domain" description="MPN" evidence="2">
    <location>
        <begin position="30"/>
        <end position="166"/>
    </location>
</feature>
<feature type="region of interest" description="Disordered" evidence="3">
    <location>
        <begin position="307"/>
        <end position="375"/>
    </location>
</feature>
<feature type="compositionally biased region" description="Gly residues" evidence="3">
    <location>
        <begin position="323"/>
        <end position="332"/>
    </location>
</feature>
<feature type="compositionally biased region" description="Basic and acidic residues" evidence="3">
    <location>
        <begin position="336"/>
        <end position="345"/>
    </location>
</feature>
<feature type="compositionally biased region" description="Basic and acidic residues" evidence="3">
    <location>
        <begin position="358"/>
        <end position="375"/>
    </location>
</feature>
<gene>
    <name type="ORF">An08g00880</name>
</gene>
<reference key="1">
    <citation type="journal article" date="2007" name="Nat. Biotechnol.">
        <title>Genome sequencing and analysis of the versatile cell factory Aspergillus niger CBS 513.88.</title>
        <authorList>
            <person name="Pel H.J."/>
            <person name="de Winde J.H."/>
            <person name="Archer D.B."/>
            <person name="Dyer P.S."/>
            <person name="Hofmann G."/>
            <person name="Schaap P.J."/>
            <person name="Turner G."/>
            <person name="de Vries R.P."/>
            <person name="Albang R."/>
            <person name="Albermann K."/>
            <person name="Andersen M.R."/>
            <person name="Bendtsen J.D."/>
            <person name="Benen J.A.E."/>
            <person name="van den Berg M."/>
            <person name="Breestraat S."/>
            <person name="Caddick M.X."/>
            <person name="Contreras R."/>
            <person name="Cornell M."/>
            <person name="Coutinho P.M."/>
            <person name="Danchin E.G.J."/>
            <person name="Debets A.J.M."/>
            <person name="Dekker P."/>
            <person name="van Dijck P.W.M."/>
            <person name="van Dijk A."/>
            <person name="Dijkhuizen L."/>
            <person name="Driessen A.J.M."/>
            <person name="d'Enfert C."/>
            <person name="Geysens S."/>
            <person name="Goosen C."/>
            <person name="Groot G.S.P."/>
            <person name="de Groot P.W.J."/>
            <person name="Guillemette T."/>
            <person name="Henrissat B."/>
            <person name="Herweijer M."/>
            <person name="van den Hombergh J.P.T.W."/>
            <person name="van den Hondel C.A.M.J.J."/>
            <person name="van der Heijden R.T.J.M."/>
            <person name="van der Kaaij R.M."/>
            <person name="Klis F.M."/>
            <person name="Kools H.J."/>
            <person name="Kubicek C.P."/>
            <person name="van Kuyk P.A."/>
            <person name="Lauber J."/>
            <person name="Lu X."/>
            <person name="van der Maarel M.J.E.C."/>
            <person name="Meulenberg R."/>
            <person name="Menke H."/>
            <person name="Mortimer M.A."/>
            <person name="Nielsen J."/>
            <person name="Oliver S.G."/>
            <person name="Olsthoorn M."/>
            <person name="Pal K."/>
            <person name="van Peij N.N.M.E."/>
            <person name="Ram A.F.J."/>
            <person name="Rinas U."/>
            <person name="Roubos J.A."/>
            <person name="Sagt C.M.J."/>
            <person name="Schmoll M."/>
            <person name="Sun J."/>
            <person name="Ussery D."/>
            <person name="Varga J."/>
            <person name="Vervecken W."/>
            <person name="van de Vondervoort P.J.J."/>
            <person name="Wedler H."/>
            <person name="Woesten H.A.B."/>
            <person name="Zeng A.-P."/>
            <person name="van Ooyen A.J.J."/>
            <person name="Visser J."/>
            <person name="Stam H."/>
        </authorList>
    </citation>
    <scope>NUCLEOTIDE SEQUENCE [LARGE SCALE GENOMIC DNA]</scope>
    <source>
        <strain>ATCC MYA-4892 / CBS 513.88 / FGSC A1513</strain>
    </source>
</reference>
<protein>
    <recommendedName>
        <fullName evidence="1">Eukaryotic translation initiation factor 3 subunit F</fullName>
        <shortName evidence="1">eIF3f</shortName>
    </recommendedName>
</protein>
<keyword id="KW-0963">Cytoplasm</keyword>
<keyword id="KW-0396">Initiation factor</keyword>
<keyword id="KW-0648">Protein biosynthesis</keyword>
<keyword id="KW-1185">Reference proteome</keyword>
<proteinExistence type="inferred from homology"/>